<keyword id="KW-1185">Reference proteome</keyword>
<keyword id="KW-0687">Ribonucleoprotein</keyword>
<keyword id="KW-0689">Ribosomal protein</keyword>
<keyword id="KW-0694">RNA-binding</keyword>
<keyword id="KW-0699">rRNA-binding</keyword>
<accession>A8A8W4</accession>
<organism>
    <name type="scientific">Ignicoccus hospitalis (strain KIN4/I / DSM 18386 / JCM 14125)</name>
    <dbReference type="NCBI Taxonomy" id="453591"/>
    <lineage>
        <taxon>Archaea</taxon>
        <taxon>Thermoproteota</taxon>
        <taxon>Thermoprotei</taxon>
        <taxon>Desulfurococcales</taxon>
        <taxon>Desulfurococcaceae</taxon>
        <taxon>Ignicoccus</taxon>
    </lineage>
</organism>
<comment type="function">
    <text evidence="1">Located on the platform of the 30S subunit.</text>
</comment>
<comment type="subunit">
    <text evidence="1">Part of the 30S ribosomal subunit.</text>
</comment>
<comment type="similarity">
    <text evidence="1">Belongs to the universal ribosomal protein uS11 family.</text>
</comment>
<name>RS11_IGNH4</name>
<proteinExistence type="inferred from homology"/>
<evidence type="ECO:0000255" key="1">
    <source>
        <dbReference type="HAMAP-Rule" id="MF_01310"/>
    </source>
</evidence>
<evidence type="ECO:0000305" key="2"/>
<dbReference type="EMBL" id="CP000816">
    <property type="protein sequence ID" value="ABU81366.1"/>
    <property type="molecule type" value="Genomic_DNA"/>
</dbReference>
<dbReference type="RefSeq" id="WP_011998218.1">
    <property type="nucleotide sequence ID" value="NC_009776.1"/>
</dbReference>
<dbReference type="SMR" id="A8A8W4"/>
<dbReference type="STRING" id="453591.Igni_0182"/>
<dbReference type="GeneID" id="5562265"/>
<dbReference type="KEGG" id="iho:Igni_0182"/>
<dbReference type="eggNOG" id="arCOG04240">
    <property type="taxonomic scope" value="Archaea"/>
</dbReference>
<dbReference type="HOGENOM" id="CLU_072439_6_0_2"/>
<dbReference type="OrthoDB" id="12054at2157"/>
<dbReference type="PhylomeDB" id="A8A8W4"/>
<dbReference type="Proteomes" id="UP000000262">
    <property type="component" value="Chromosome"/>
</dbReference>
<dbReference type="GO" id="GO:1990904">
    <property type="term" value="C:ribonucleoprotein complex"/>
    <property type="evidence" value="ECO:0007669"/>
    <property type="project" value="UniProtKB-KW"/>
</dbReference>
<dbReference type="GO" id="GO:0005840">
    <property type="term" value="C:ribosome"/>
    <property type="evidence" value="ECO:0007669"/>
    <property type="project" value="UniProtKB-KW"/>
</dbReference>
<dbReference type="GO" id="GO:0019843">
    <property type="term" value="F:rRNA binding"/>
    <property type="evidence" value="ECO:0007669"/>
    <property type="project" value="UniProtKB-UniRule"/>
</dbReference>
<dbReference type="GO" id="GO:0003735">
    <property type="term" value="F:structural constituent of ribosome"/>
    <property type="evidence" value="ECO:0007669"/>
    <property type="project" value="InterPro"/>
</dbReference>
<dbReference type="GO" id="GO:0006412">
    <property type="term" value="P:translation"/>
    <property type="evidence" value="ECO:0007669"/>
    <property type="project" value="UniProtKB-UniRule"/>
</dbReference>
<dbReference type="FunFam" id="3.30.420.80:FF:000007">
    <property type="entry name" value="30S ribosomal protein S11"/>
    <property type="match status" value="1"/>
</dbReference>
<dbReference type="Gene3D" id="3.30.420.80">
    <property type="entry name" value="Ribosomal protein S11"/>
    <property type="match status" value="1"/>
</dbReference>
<dbReference type="HAMAP" id="MF_01310">
    <property type="entry name" value="Ribosomal_uS11"/>
    <property type="match status" value="1"/>
</dbReference>
<dbReference type="InterPro" id="IPR001971">
    <property type="entry name" value="Ribosomal_uS11"/>
</dbReference>
<dbReference type="InterPro" id="IPR019961">
    <property type="entry name" value="Ribosomal_uS11_archaeal"/>
</dbReference>
<dbReference type="InterPro" id="IPR018102">
    <property type="entry name" value="Ribosomal_uS11_CS"/>
</dbReference>
<dbReference type="InterPro" id="IPR036967">
    <property type="entry name" value="Ribosomal_uS11_sf"/>
</dbReference>
<dbReference type="NCBIfam" id="TIGR03628">
    <property type="entry name" value="arch_S11P"/>
    <property type="match status" value="1"/>
</dbReference>
<dbReference type="NCBIfam" id="NF007176">
    <property type="entry name" value="PRK09607.1"/>
    <property type="match status" value="1"/>
</dbReference>
<dbReference type="PANTHER" id="PTHR11759">
    <property type="entry name" value="40S RIBOSOMAL PROTEIN S14/30S RIBOSOMAL PROTEIN S11"/>
    <property type="match status" value="1"/>
</dbReference>
<dbReference type="Pfam" id="PF00411">
    <property type="entry name" value="Ribosomal_S11"/>
    <property type="match status" value="1"/>
</dbReference>
<dbReference type="PIRSF" id="PIRSF002131">
    <property type="entry name" value="Ribosomal_S11"/>
    <property type="match status" value="1"/>
</dbReference>
<dbReference type="SUPFAM" id="SSF53137">
    <property type="entry name" value="Translational machinery components"/>
    <property type="match status" value="1"/>
</dbReference>
<dbReference type="PROSITE" id="PS00054">
    <property type="entry name" value="RIBOSOMAL_S11"/>
    <property type="match status" value="1"/>
</dbReference>
<feature type="chain" id="PRO_0000323348" description="Small ribosomal subunit protein uS11">
    <location>
        <begin position="1"/>
        <end position="130"/>
    </location>
</feature>
<reference key="1">
    <citation type="journal article" date="2008" name="Genome Biol.">
        <title>A genomic analysis of the archaeal system Ignicoccus hospitalis-Nanoarchaeum equitans.</title>
        <authorList>
            <person name="Podar M."/>
            <person name="Anderson I."/>
            <person name="Makarova K.S."/>
            <person name="Elkins J.G."/>
            <person name="Ivanova N."/>
            <person name="Wall M.A."/>
            <person name="Lykidis A."/>
            <person name="Mavromatis K."/>
            <person name="Sun H."/>
            <person name="Hudson M.E."/>
            <person name="Chen W."/>
            <person name="Deciu C."/>
            <person name="Hutchison D."/>
            <person name="Eads J.R."/>
            <person name="Anderson A."/>
            <person name="Fernandes F."/>
            <person name="Szeto E."/>
            <person name="Lapidus A."/>
            <person name="Kyrpides N.C."/>
            <person name="Saier M.H. Jr."/>
            <person name="Richardson P.M."/>
            <person name="Rachel R."/>
            <person name="Huber H."/>
            <person name="Eisen J.A."/>
            <person name="Koonin E.V."/>
            <person name="Keller M."/>
            <person name="Stetter K.O."/>
        </authorList>
    </citation>
    <scope>NUCLEOTIDE SEQUENCE [LARGE SCALE GENOMIC DNA]</scope>
    <source>
        <strain>KIN4/I / DSM 18386 / JCM 14125</strain>
    </source>
</reference>
<sequence length="130" mass="13855">MPKEIRWGVAHIFSSPNNTFVHITDITGSETASRVTGGMVVKADHEKPSPYAAMIAAARAAQQAMERGITAIHIKVRAPGGYGPKTPGPGAQAAIRALARSGFIIGRIEDVTPLPHDTIRRPGGRRGRRV</sequence>
<protein>
    <recommendedName>
        <fullName evidence="1">Small ribosomal subunit protein uS11</fullName>
    </recommendedName>
    <alternativeName>
        <fullName evidence="2">30S ribosomal protein S11</fullName>
    </alternativeName>
</protein>
<gene>
    <name evidence="1" type="primary">rps11</name>
    <name type="ordered locus">Igni_0182</name>
</gene>